<reference key="1">
    <citation type="journal article" date="2000" name="Genomics">
        <title>Sequence, structure, and evolution of a complete human olfactory receptor gene cluster.</title>
        <authorList>
            <person name="Glusman G."/>
            <person name="Sosinsky A."/>
            <person name="Ben-Asher E."/>
            <person name="Avidan N."/>
            <person name="Sonkin D."/>
            <person name="Bahar A."/>
            <person name="Rosenthal A."/>
            <person name="Clifton S."/>
            <person name="Roe B."/>
            <person name="Ferraz C."/>
            <person name="Demaille J.G."/>
            <person name="Lancet D."/>
        </authorList>
    </citation>
    <scope>NUCLEOTIDE SEQUENCE [GENOMIC DNA]</scope>
    <scope>VARIANT GLU-317</scope>
</reference>
<reference key="2">
    <citation type="submission" date="1998-09" db="EMBL/GenBank/DDBJ databases">
        <title>DNA sequence of PAC clone PAC_clone_LLNLP704E02527Q3 from the olfactory receptor gene cluster of human chromosome 17p13.3, containing OR genes 2, 201, 93 and pseudogene 1.</title>
        <authorList>
            <person name="Ferraz C."/>
            <person name="Vidal S."/>
            <person name="Brun C."/>
            <person name="Demaille J.G."/>
        </authorList>
    </citation>
    <scope>NUCLEOTIDE SEQUENCE [GENOMIC DNA]</scope>
    <scope>VARIANT GLU-317</scope>
</reference>
<reference key="3">
    <citation type="submission" date="2002-02" db="EMBL/GenBank/DDBJ databases">
        <title>Sequence of cosmid ICRF105cH07155 of the olfactory receptor gene cluster of human chromosome 17p13.3.</title>
        <authorList>
            <person name="Ferraz C."/>
            <person name="Demaille J.G."/>
        </authorList>
    </citation>
    <scope>NUCLEOTIDE SEQUENCE [GENOMIC DNA]</scope>
    <scope>VARIANT GLU-317</scope>
</reference>
<reference key="4">
    <citation type="submission" date="2002-02" db="EMBL/GenBank/DDBJ databases">
        <title>Sequence of cosmid ICRF105cE06173 of human chromosome 17p13.3 olfactory receptor gene cluster, containing genes OR17-32 and OR17-201-1, and pseudogene OR17-01.</title>
        <authorList>
            <person name="Ferraz C."/>
            <person name="Demaille J.G."/>
        </authorList>
    </citation>
    <scope>NUCLEOTIDE SEQUENCE [GENOMIC DNA]</scope>
    <scope>VARIANT GLU-317</scope>
</reference>
<reference key="5">
    <citation type="journal article" date="2006" name="Nature">
        <title>DNA sequence of human chromosome 17 and analysis of rearrangement in the human lineage.</title>
        <authorList>
            <person name="Zody M.C."/>
            <person name="Garber M."/>
            <person name="Adams D.J."/>
            <person name="Sharpe T."/>
            <person name="Harrow J."/>
            <person name="Lupski J.R."/>
            <person name="Nicholson C."/>
            <person name="Searle S.M."/>
            <person name="Wilming L."/>
            <person name="Young S.K."/>
            <person name="Abouelleil A."/>
            <person name="Allen N.R."/>
            <person name="Bi W."/>
            <person name="Bloom T."/>
            <person name="Borowsky M.L."/>
            <person name="Bugalter B.E."/>
            <person name="Butler J."/>
            <person name="Chang J.L."/>
            <person name="Chen C.-K."/>
            <person name="Cook A."/>
            <person name="Corum B."/>
            <person name="Cuomo C.A."/>
            <person name="de Jong P.J."/>
            <person name="DeCaprio D."/>
            <person name="Dewar K."/>
            <person name="FitzGerald M."/>
            <person name="Gilbert J."/>
            <person name="Gibson R."/>
            <person name="Gnerre S."/>
            <person name="Goldstein S."/>
            <person name="Grafham D.V."/>
            <person name="Grocock R."/>
            <person name="Hafez N."/>
            <person name="Hagopian D.S."/>
            <person name="Hart E."/>
            <person name="Norman C.H."/>
            <person name="Humphray S."/>
            <person name="Jaffe D.B."/>
            <person name="Jones M."/>
            <person name="Kamal M."/>
            <person name="Khodiyar V.K."/>
            <person name="LaButti K."/>
            <person name="Laird G."/>
            <person name="Lehoczky J."/>
            <person name="Liu X."/>
            <person name="Lokyitsang T."/>
            <person name="Loveland J."/>
            <person name="Lui A."/>
            <person name="Macdonald P."/>
            <person name="Major J.E."/>
            <person name="Matthews L."/>
            <person name="Mauceli E."/>
            <person name="McCarroll S.A."/>
            <person name="Mihalev A.H."/>
            <person name="Mudge J."/>
            <person name="Nguyen C."/>
            <person name="Nicol R."/>
            <person name="O'Leary S.B."/>
            <person name="Osoegawa K."/>
            <person name="Schwartz D.C."/>
            <person name="Shaw-Smith C."/>
            <person name="Stankiewicz P."/>
            <person name="Steward C."/>
            <person name="Swarbreck D."/>
            <person name="Venkataraman V."/>
            <person name="Whittaker C.A."/>
            <person name="Yang X."/>
            <person name="Zimmer A.R."/>
            <person name="Bradley A."/>
            <person name="Hubbard T."/>
            <person name="Birren B.W."/>
            <person name="Rogers J."/>
            <person name="Lander E.S."/>
            <person name="Nusbaum C."/>
        </authorList>
    </citation>
    <scope>NUCLEOTIDE SEQUENCE [LARGE SCALE GENOMIC DNA]</scope>
</reference>
<reference key="6">
    <citation type="journal article" date="2004" name="Genome Res.">
        <title>The status, quality, and expansion of the NIH full-length cDNA project: the Mammalian Gene Collection (MGC).</title>
        <authorList>
            <consortium name="The MGC Project Team"/>
        </authorList>
    </citation>
    <scope>NUCLEOTIDE SEQUENCE [LARGE SCALE MRNA]</scope>
    <scope>VARIANT GLU-317</scope>
</reference>
<reference key="7">
    <citation type="journal article" date="1994" name="Hum. Mol. Genet.">
        <title>Olfactory receptor gene cluster on human chromosome 17: possible duplication of an ancestral receptor repertoire.</title>
        <authorList>
            <person name="Ben-Arie N."/>
            <person name="Lancet D."/>
            <person name="Taylor C."/>
            <person name="Khen M."/>
            <person name="Walker N."/>
            <person name="Ledbetter D.H."/>
            <person name="Carrozzo R."/>
            <person name="Patel K."/>
            <person name="Sheer D."/>
            <person name="Lehrach H."/>
            <person name="North M.A."/>
        </authorList>
    </citation>
    <scope>NUCLEOTIDE SEQUENCE [GENOMIC DNA] OF 77-292</scope>
</reference>
<reference key="8">
    <citation type="journal article" date="2002" name="Genomics">
        <title>DEFOG: a practical scheme for deciphering families of genes.</title>
        <authorList>
            <person name="Fuchs T."/>
            <person name="Malecova B."/>
            <person name="Linhart C."/>
            <person name="Sharan R."/>
            <person name="Khen M."/>
            <person name="Herwig R."/>
            <person name="Shmulevich D."/>
            <person name="Elkon R."/>
            <person name="Steinfath M."/>
            <person name="O'Brien J.K."/>
            <person name="Radelof U."/>
            <person name="Lehrach H."/>
            <person name="Lancet D."/>
            <person name="Shamir R."/>
        </authorList>
    </citation>
    <scope>NUCLEOTIDE SEQUENCE [GENOMIC DNA] OF 77-292</scope>
</reference>
<reference key="9">
    <citation type="journal article" date="2004" name="Proc. Natl. Acad. Sci. U.S.A.">
        <title>The human olfactory receptor gene family.</title>
        <authorList>
            <person name="Malnic B."/>
            <person name="Godfrey P.A."/>
            <person name="Buck L.B."/>
        </authorList>
    </citation>
    <scope>IDENTIFICATION</scope>
    <scope>VARIANT GLU-317</scope>
</reference>
<reference key="10">
    <citation type="journal article" date="2004" name="Proc. Natl. Acad. Sci. U.S.A.">
        <authorList>
            <person name="Malnic B."/>
            <person name="Godfrey P.A."/>
            <person name="Buck L.B."/>
        </authorList>
    </citation>
    <scope>ERRATUM OF PUBMED:14983052</scope>
</reference>
<protein>
    <recommendedName>
        <fullName>Olfactory receptor 3A3</fullName>
    </recommendedName>
    <alternativeName>
        <fullName>Olfactory receptor 17-201</fullName>
        <shortName>OR17-201</shortName>
    </alternativeName>
    <alternativeName>
        <fullName>Olfactory receptor 3A6</fullName>
    </alternativeName>
    <alternativeName>
        <fullName>Olfactory receptor 3A7</fullName>
    </alternativeName>
    <alternativeName>
        <fullName>Olfactory receptor 3A8</fullName>
    </alternativeName>
    <alternativeName>
        <fullName>Olfactory receptor OR17-22</fullName>
    </alternativeName>
</protein>
<gene>
    <name type="primary">OR3A3</name>
    <name type="synonym">OR3A6</name>
    <name type="synonym">OR3A7</name>
    <name type="synonym">OR3A8P</name>
</gene>
<accession>P47888</accession>
<accession>Q2VPE4</accession>
<accession>Q6IFM6</accession>
<accession>Q9P1Q4</accession>
<accession>Q9UBE7</accession>
<name>OR3A3_HUMAN</name>
<keyword id="KW-1003">Cell membrane</keyword>
<keyword id="KW-1015">Disulfide bond</keyword>
<keyword id="KW-0297">G-protein coupled receptor</keyword>
<keyword id="KW-0325">Glycoprotein</keyword>
<keyword id="KW-0472">Membrane</keyword>
<keyword id="KW-0552">Olfaction</keyword>
<keyword id="KW-0675">Receptor</keyword>
<keyword id="KW-1185">Reference proteome</keyword>
<keyword id="KW-0716">Sensory transduction</keyword>
<keyword id="KW-0807">Transducer</keyword>
<keyword id="KW-0812">Transmembrane</keyword>
<keyword id="KW-1133">Transmembrane helix</keyword>
<organism>
    <name type="scientific">Homo sapiens</name>
    <name type="common">Human</name>
    <dbReference type="NCBI Taxonomy" id="9606"/>
    <lineage>
        <taxon>Eukaryota</taxon>
        <taxon>Metazoa</taxon>
        <taxon>Chordata</taxon>
        <taxon>Craniata</taxon>
        <taxon>Vertebrata</taxon>
        <taxon>Euteleostomi</taxon>
        <taxon>Mammalia</taxon>
        <taxon>Eutheria</taxon>
        <taxon>Euarchontoglires</taxon>
        <taxon>Primates</taxon>
        <taxon>Haplorrhini</taxon>
        <taxon>Catarrhini</taxon>
        <taxon>Hominidae</taxon>
        <taxon>Homo</taxon>
    </lineage>
</organism>
<comment type="function">
    <text evidence="9">Odorant receptor.</text>
</comment>
<comment type="subcellular location">
    <subcellularLocation>
        <location>Cell membrane</location>
        <topology>Multi-pass membrane protein</topology>
    </subcellularLocation>
</comment>
<comment type="similarity">
    <text evidence="2">Belongs to the G-protein coupled receptor 1 family.</text>
</comment>
<comment type="caution">
    <text evidence="9">It is uncertain whether Met-1 or Met-7 is the initiator.</text>
</comment>
<comment type="sequence caution" evidence="9">
    <conflict type="erroneous initiation">
        <sequence resource="EMBL-CDS" id="AAI08922"/>
    </conflict>
</comment>
<comment type="online information" name="Human Olfactory Receptor Data Exploratorium (HORDE)">
    <link uri="http://genome.weizmann.ac.il/horde/card/index/symbol:OR3A3"/>
</comment>
<proteinExistence type="evidence at transcript level"/>
<evidence type="ECO:0000255" key="1"/>
<evidence type="ECO:0000255" key="2">
    <source>
        <dbReference type="PROSITE-ProRule" id="PRU00521"/>
    </source>
</evidence>
<evidence type="ECO:0000269" key="3">
    <source>
    </source>
</evidence>
<evidence type="ECO:0000269" key="4">
    <source>
    </source>
</evidence>
<evidence type="ECO:0000269" key="5">
    <source>
    </source>
</evidence>
<evidence type="ECO:0000269" key="6">
    <source ref="2"/>
</evidence>
<evidence type="ECO:0000269" key="7">
    <source ref="3"/>
</evidence>
<evidence type="ECO:0000269" key="8">
    <source ref="4"/>
</evidence>
<evidence type="ECO:0000305" key="9"/>
<dbReference type="EMBL" id="AC007194">
    <property type="status" value="NOT_ANNOTATED_CDS"/>
    <property type="molecule type" value="Genomic_DNA"/>
</dbReference>
<dbReference type="EMBL" id="AF087926">
    <property type="protein sequence ID" value="AAF37316.1"/>
    <property type="molecule type" value="Genomic_DNA"/>
</dbReference>
<dbReference type="EMBL" id="AF095725">
    <property type="protein sequence ID" value="AAF03262.1"/>
    <property type="molecule type" value="Genomic_DNA"/>
</dbReference>
<dbReference type="EMBL" id="U76377">
    <property type="protein sequence ID" value="AAD00250.1"/>
    <property type="molecule type" value="Genomic_DNA"/>
</dbReference>
<dbReference type="EMBL" id="U78308">
    <property type="protein sequence ID" value="AAD00277.1"/>
    <property type="molecule type" value="Genomic_DNA"/>
</dbReference>
<dbReference type="EMBL" id="AC025125">
    <property type="status" value="NOT_ANNOTATED_CDS"/>
    <property type="molecule type" value="Genomic_DNA"/>
</dbReference>
<dbReference type="EMBL" id="BC069415">
    <property type="protein sequence ID" value="AAH69415.1"/>
    <property type="molecule type" value="mRNA"/>
</dbReference>
<dbReference type="EMBL" id="BC108921">
    <property type="protein sequence ID" value="AAI08922.2"/>
    <property type="status" value="ALT_INIT"/>
    <property type="molecule type" value="mRNA"/>
</dbReference>
<dbReference type="EMBL" id="U04688">
    <property type="protein sequence ID" value="AAA18351.1"/>
    <property type="molecule type" value="Genomic_DNA"/>
</dbReference>
<dbReference type="EMBL" id="AF399620">
    <property type="protein sequence ID" value="AAK95105.1"/>
    <property type="molecule type" value="Genomic_DNA"/>
</dbReference>
<dbReference type="EMBL" id="BK004236">
    <property type="protein sequence ID" value="DAA04634.1"/>
    <property type="molecule type" value="Genomic_DNA"/>
</dbReference>
<dbReference type="PIR" id="I38480">
    <property type="entry name" value="I38480"/>
</dbReference>
<dbReference type="RefSeq" id="NP_036505.2">
    <property type="nucleotide sequence ID" value="NM_012373.2"/>
</dbReference>
<dbReference type="SMR" id="P47888"/>
<dbReference type="FunCoup" id="P47888">
    <property type="interactions" value="438"/>
</dbReference>
<dbReference type="STRING" id="9606.ENSP00000291231"/>
<dbReference type="GlyCosmos" id="P47888">
    <property type="glycosylation" value="1 site, No reported glycans"/>
</dbReference>
<dbReference type="GlyGen" id="P47888">
    <property type="glycosylation" value="1 site"/>
</dbReference>
<dbReference type="iPTMnet" id="P47888"/>
<dbReference type="PhosphoSitePlus" id="P47888"/>
<dbReference type="BioMuta" id="OR3A3"/>
<dbReference type="DMDM" id="226694174"/>
<dbReference type="MassIVE" id="P47888"/>
<dbReference type="PaxDb" id="9606-ENSP00000291231"/>
<dbReference type="Antibodypedia" id="23008">
    <property type="antibodies" value="82 antibodies from 17 providers"/>
</dbReference>
<dbReference type="DNASU" id="8392"/>
<dbReference type="GeneID" id="8392"/>
<dbReference type="KEGG" id="hsa:8392"/>
<dbReference type="UCSC" id="uc010vrd.2">
    <property type="organism name" value="human"/>
</dbReference>
<dbReference type="AGR" id="HGNC:8284"/>
<dbReference type="CTD" id="8392"/>
<dbReference type="GeneCards" id="OR3A3"/>
<dbReference type="HGNC" id="HGNC:8284">
    <property type="gene designation" value="OR3A3"/>
</dbReference>
<dbReference type="neXtProt" id="NX_P47888"/>
<dbReference type="PharmGKB" id="PA32225"/>
<dbReference type="VEuPathDB" id="HostDB:ENSG00000159961"/>
<dbReference type="eggNOG" id="ENOG502RU1B">
    <property type="taxonomic scope" value="Eukaryota"/>
</dbReference>
<dbReference type="HOGENOM" id="CLU_012526_8_1_1"/>
<dbReference type="InParanoid" id="P47888"/>
<dbReference type="OrthoDB" id="9827787at2759"/>
<dbReference type="PAN-GO" id="P47888">
    <property type="GO annotations" value="3 GO annotations based on evolutionary models"/>
</dbReference>
<dbReference type="PhylomeDB" id="P47888"/>
<dbReference type="TreeFam" id="TF352732"/>
<dbReference type="PathwayCommons" id="P47888"/>
<dbReference type="Reactome" id="R-HSA-9752946">
    <property type="pathway name" value="Expression and translocation of olfactory receptors"/>
</dbReference>
<dbReference type="BioGRID-ORCS" id="8392">
    <property type="hits" value="27 hits in 690 CRISPR screens"/>
</dbReference>
<dbReference type="ChiTaRS" id="OR3A3">
    <property type="organism name" value="human"/>
</dbReference>
<dbReference type="GeneWiki" id="OR3A3"/>
<dbReference type="GenomeRNAi" id="8392"/>
<dbReference type="Pharos" id="P47888">
    <property type="development level" value="Tdark"/>
</dbReference>
<dbReference type="PRO" id="PR:P47888"/>
<dbReference type="Proteomes" id="UP000005640">
    <property type="component" value="Chromosome 17"/>
</dbReference>
<dbReference type="RNAct" id="P47888">
    <property type="molecule type" value="protein"/>
</dbReference>
<dbReference type="GO" id="GO:0005886">
    <property type="term" value="C:plasma membrane"/>
    <property type="evidence" value="ECO:0000318"/>
    <property type="project" value="GO_Central"/>
</dbReference>
<dbReference type="GO" id="GO:0004930">
    <property type="term" value="F:G protein-coupled receptor activity"/>
    <property type="evidence" value="ECO:0007669"/>
    <property type="project" value="UniProtKB-KW"/>
</dbReference>
<dbReference type="GO" id="GO:0004984">
    <property type="term" value="F:olfactory receptor activity"/>
    <property type="evidence" value="ECO:0000318"/>
    <property type="project" value="GO_Central"/>
</dbReference>
<dbReference type="GO" id="GO:0007165">
    <property type="term" value="P:signal transduction"/>
    <property type="evidence" value="ECO:0000318"/>
    <property type="project" value="GO_Central"/>
</dbReference>
<dbReference type="CDD" id="cd15233">
    <property type="entry name" value="7tmA_OR3A-like"/>
    <property type="match status" value="1"/>
</dbReference>
<dbReference type="FunFam" id="1.20.1070.10:FF:000010">
    <property type="entry name" value="Olfactory receptor"/>
    <property type="match status" value="1"/>
</dbReference>
<dbReference type="Gene3D" id="1.20.1070.10">
    <property type="entry name" value="Rhodopsin 7-helix transmembrane proteins"/>
    <property type="match status" value="1"/>
</dbReference>
<dbReference type="InterPro" id="IPR000276">
    <property type="entry name" value="GPCR_Rhodpsn"/>
</dbReference>
<dbReference type="InterPro" id="IPR017452">
    <property type="entry name" value="GPCR_Rhodpsn_7TM"/>
</dbReference>
<dbReference type="InterPro" id="IPR000725">
    <property type="entry name" value="Olfact_rcpt"/>
</dbReference>
<dbReference type="PANTHER" id="PTHR48001">
    <property type="entry name" value="OLFACTORY RECEPTOR"/>
    <property type="match status" value="1"/>
</dbReference>
<dbReference type="Pfam" id="PF13853">
    <property type="entry name" value="7tm_4"/>
    <property type="match status" value="1"/>
</dbReference>
<dbReference type="PRINTS" id="PR00237">
    <property type="entry name" value="GPCRRHODOPSN"/>
</dbReference>
<dbReference type="PRINTS" id="PR00245">
    <property type="entry name" value="OLFACTORYR"/>
</dbReference>
<dbReference type="SUPFAM" id="SSF81321">
    <property type="entry name" value="Family A G protein-coupled receptor-like"/>
    <property type="match status" value="1"/>
</dbReference>
<dbReference type="PROSITE" id="PS50262">
    <property type="entry name" value="G_PROTEIN_RECEP_F1_2"/>
    <property type="match status" value="1"/>
</dbReference>
<sequence>MSLQKLMEPEAGTNRTAVAEFILLGLVQTEEMQPVVFVLLLFAYLVTTGGNLSILAAVLVEPKLHAPMYFFLGNLSVLDVGCITVTVPAMLGRLLSHKSTISYDACLSQLFFFHLLAGMDCFLLTAMAYDRLLAICQPLTYSTRMSQTVQRMLVAASWACAFTNALTHTVAMSTLNFCGPNEVNHFYCDLPQLFQLSCSSTQLNELLLFVAAAFMAVAPLVFISVSYAHVVAAVLQIRSAEGRKKAFSTCGSHLTVVGIFYGTGVFSYMRLGSVESSDKDKGVGVFMTVINPMLNPLIYSLRNTDVQGALCQLLVGKRSLT</sequence>
<feature type="chain" id="PRO_0000150520" description="Olfactory receptor 3A3">
    <location>
        <begin position="1"/>
        <end position="321"/>
    </location>
</feature>
<feature type="topological domain" description="Extracellular" evidence="1">
    <location>
        <begin position="1"/>
        <end position="34"/>
    </location>
</feature>
<feature type="transmembrane region" description="Helical; Name=1" evidence="1">
    <location>
        <begin position="35"/>
        <end position="58"/>
    </location>
</feature>
<feature type="topological domain" description="Cytoplasmic" evidence="1">
    <location>
        <begin position="59"/>
        <end position="66"/>
    </location>
</feature>
<feature type="transmembrane region" description="Helical; Name=2" evidence="1">
    <location>
        <begin position="67"/>
        <end position="88"/>
    </location>
</feature>
<feature type="topological domain" description="Extracellular" evidence="1">
    <location>
        <begin position="89"/>
        <end position="109"/>
    </location>
</feature>
<feature type="transmembrane region" description="Helical; Name=3" evidence="1">
    <location>
        <begin position="110"/>
        <end position="129"/>
    </location>
</feature>
<feature type="topological domain" description="Cytoplasmic" evidence="1">
    <location>
        <begin position="130"/>
        <end position="149"/>
    </location>
</feature>
<feature type="transmembrane region" description="Helical; Name=4" evidence="1">
    <location>
        <begin position="150"/>
        <end position="167"/>
    </location>
</feature>
<feature type="topological domain" description="Extracellular" evidence="1">
    <location>
        <begin position="168"/>
        <end position="205"/>
    </location>
</feature>
<feature type="transmembrane region" description="Helical; Name=5" evidence="1">
    <location>
        <begin position="206"/>
        <end position="228"/>
    </location>
</feature>
<feature type="topological domain" description="Cytoplasmic" evidence="1">
    <location>
        <begin position="229"/>
        <end position="245"/>
    </location>
</feature>
<feature type="transmembrane region" description="Helical; Name=6" evidence="1">
    <location>
        <begin position="246"/>
        <end position="268"/>
    </location>
</feature>
<feature type="topological domain" description="Extracellular" evidence="1">
    <location>
        <begin position="269"/>
        <end position="281"/>
    </location>
</feature>
<feature type="transmembrane region" description="Helical; Name=7" evidence="1">
    <location>
        <begin position="282"/>
        <end position="301"/>
    </location>
</feature>
<feature type="topological domain" description="Cytoplasmic" evidence="1">
    <location>
        <begin position="302"/>
        <end position="321"/>
    </location>
</feature>
<feature type="glycosylation site" description="N-linked (GlcNAc...) asparagine" evidence="1">
    <location>
        <position position="14"/>
    </location>
</feature>
<feature type="disulfide bond" evidence="2">
    <location>
        <begin position="106"/>
        <end position="198"/>
    </location>
</feature>
<feature type="sequence variant" id="VAR_054961" description="In dbSNP:rs769432.">
    <original>L</original>
    <variation>F</variation>
    <location>
        <position position="132"/>
    </location>
</feature>
<feature type="sequence variant" id="VAR_054962" description="In dbSNP:rs916039.">
    <original>W</original>
    <variation>L</variation>
    <location>
        <position position="158"/>
    </location>
</feature>
<feature type="sequence variant" id="VAR_054963" description="In dbSNP:rs12939997.">
    <original>M</original>
    <variation>V</variation>
    <location>
        <position position="287"/>
    </location>
</feature>
<feature type="sequence variant" id="VAR_054964" description="In dbSNP:rs227787." evidence="3 4 5 6 7 8">
    <original>K</original>
    <variation>E</variation>
    <location>
        <position position="317"/>
    </location>
</feature>
<feature type="sequence conflict" description="In Ref. 1; AAF37316/AC007194, 2; AAF03262, 3; AAD00250, 4; AAD00277 and 6; AAH69415." evidence="9" ref="1 2 3 4 6">
    <original>T</original>
    <variation>I</variation>
    <location>
        <position position="48"/>
    </location>
</feature>
<feature type="sequence conflict" description="In Ref. 7; AAA18351." evidence="9" ref="7">
    <original>A</original>
    <variation>G</variation>
    <location>
        <position position="171"/>
    </location>
</feature>
<feature type="sequence conflict" description="In Ref. 7; AAA18351." evidence="9" ref="7">
    <original>D</original>
    <variation>E</variation>
    <location>
        <position position="189"/>
    </location>
</feature>
<feature type="sequence conflict" description="In Ref. 7; AAA18351." evidence="9" ref="7">
    <original>L</original>
    <variation>V</variation>
    <location>
        <position position="193"/>
    </location>
</feature>